<protein>
    <recommendedName>
        <fullName evidence="1">Protein pelota homolog</fullName>
        <ecNumber evidence="1">3.1.-.-</ecNumber>
    </recommendedName>
</protein>
<reference key="1">
    <citation type="journal article" date="2006" name="Proc. Natl. Acad. Sci. U.S.A.">
        <title>Genomic analysis of the uncultivated marine crenarchaeote Cenarchaeum symbiosum.</title>
        <authorList>
            <person name="Hallam S.J."/>
            <person name="Konstantinidis K.T."/>
            <person name="Putnam N."/>
            <person name="Schleper C."/>
            <person name="Watanabe Y."/>
            <person name="Sugahara J."/>
            <person name="Preston C."/>
            <person name="de la Torre J."/>
            <person name="Richardson P.M."/>
            <person name="DeLong E.F."/>
        </authorList>
    </citation>
    <scope>NUCLEOTIDE SEQUENCE [LARGE SCALE GENOMIC DNA]</scope>
    <source>
        <strain>A</strain>
    </source>
</reference>
<dbReference type="EC" id="3.1.-.-" evidence="1"/>
<dbReference type="EMBL" id="DP000238">
    <property type="protein sequence ID" value="ABK77648.1"/>
    <property type="molecule type" value="Genomic_DNA"/>
</dbReference>
<dbReference type="SMR" id="A0RWD1"/>
<dbReference type="STRING" id="414004.CENSYa_1016"/>
<dbReference type="EnsemblBacteria" id="ABK77648">
    <property type="protein sequence ID" value="ABK77648"/>
    <property type="gene ID" value="CENSYa_1016"/>
</dbReference>
<dbReference type="KEGG" id="csy:CENSYa_1016"/>
<dbReference type="HOGENOM" id="CLU_023334_0_0_2"/>
<dbReference type="Proteomes" id="UP000000758">
    <property type="component" value="Chromosome"/>
</dbReference>
<dbReference type="GO" id="GO:0005737">
    <property type="term" value="C:cytoplasm"/>
    <property type="evidence" value="ECO:0007669"/>
    <property type="project" value="UniProtKB-SubCell"/>
</dbReference>
<dbReference type="GO" id="GO:0004519">
    <property type="term" value="F:endonuclease activity"/>
    <property type="evidence" value="ECO:0007669"/>
    <property type="project" value="UniProtKB-UniRule"/>
</dbReference>
<dbReference type="GO" id="GO:0046872">
    <property type="term" value="F:metal ion binding"/>
    <property type="evidence" value="ECO:0007669"/>
    <property type="project" value="UniProtKB-UniRule"/>
</dbReference>
<dbReference type="GO" id="GO:0070651">
    <property type="term" value="P:nonfunctional rRNA decay"/>
    <property type="evidence" value="ECO:0007669"/>
    <property type="project" value="TreeGrafter"/>
</dbReference>
<dbReference type="GO" id="GO:0070966">
    <property type="term" value="P:nuclear-transcribed mRNA catabolic process, no-go decay"/>
    <property type="evidence" value="ECO:0007669"/>
    <property type="project" value="InterPro"/>
</dbReference>
<dbReference type="GO" id="GO:0070481">
    <property type="term" value="P:nuclear-transcribed mRNA catabolic process, non-stop decay"/>
    <property type="evidence" value="ECO:0007669"/>
    <property type="project" value="InterPro"/>
</dbReference>
<dbReference type="GO" id="GO:0032790">
    <property type="term" value="P:ribosome disassembly"/>
    <property type="evidence" value="ECO:0007669"/>
    <property type="project" value="TreeGrafter"/>
</dbReference>
<dbReference type="GO" id="GO:0071025">
    <property type="term" value="P:RNA surveillance"/>
    <property type="evidence" value="ECO:0007669"/>
    <property type="project" value="InterPro"/>
</dbReference>
<dbReference type="Gene3D" id="3.30.1330.30">
    <property type="match status" value="1"/>
</dbReference>
<dbReference type="Gene3D" id="3.30.420.60">
    <property type="entry name" value="eRF1 domain 2"/>
    <property type="match status" value="1"/>
</dbReference>
<dbReference type="Gene3D" id="2.30.30.870">
    <property type="entry name" value="Pelota, domain A"/>
    <property type="match status" value="1"/>
</dbReference>
<dbReference type="HAMAP" id="MF_01853">
    <property type="entry name" value="PelO"/>
    <property type="match status" value="1"/>
</dbReference>
<dbReference type="InterPro" id="IPR042226">
    <property type="entry name" value="eFR1_2_sf"/>
</dbReference>
<dbReference type="InterPro" id="IPR005140">
    <property type="entry name" value="eRF1_1_Pelota"/>
</dbReference>
<dbReference type="InterPro" id="IPR005142">
    <property type="entry name" value="eRF1_3"/>
</dbReference>
<dbReference type="InterPro" id="IPR038069">
    <property type="entry name" value="Pelota/DOM34_N"/>
</dbReference>
<dbReference type="InterPro" id="IPR023521">
    <property type="entry name" value="Pelota_arc"/>
</dbReference>
<dbReference type="InterPro" id="IPR029064">
    <property type="entry name" value="Ribosomal_eL30-like_sf"/>
</dbReference>
<dbReference type="InterPro" id="IPR004405">
    <property type="entry name" value="Transl-rel_pelota"/>
</dbReference>
<dbReference type="PANTHER" id="PTHR10853">
    <property type="entry name" value="PELOTA"/>
    <property type="match status" value="1"/>
</dbReference>
<dbReference type="PANTHER" id="PTHR10853:SF0">
    <property type="entry name" value="PROTEIN PELOTA HOMOLOG"/>
    <property type="match status" value="1"/>
</dbReference>
<dbReference type="Pfam" id="PF03463">
    <property type="entry name" value="eRF1_1"/>
    <property type="match status" value="1"/>
</dbReference>
<dbReference type="Pfam" id="PF03465">
    <property type="entry name" value="eRF1_3"/>
    <property type="match status" value="1"/>
</dbReference>
<dbReference type="SMART" id="SM01194">
    <property type="entry name" value="eRF1_1"/>
    <property type="match status" value="1"/>
</dbReference>
<dbReference type="SUPFAM" id="SSF159065">
    <property type="entry name" value="Dom34/Pelota N-terminal domain-like"/>
    <property type="match status" value="1"/>
</dbReference>
<dbReference type="SUPFAM" id="SSF55315">
    <property type="entry name" value="L30e-like"/>
    <property type="match status" value="1"/>
</dbReference>
<dbReference type="SUPFAM" id="SSF53137">
    <property type="entry name" value="Translational machinery components"/>
    <property type="match status" value="1"/>
</dbReference>
<comment type="function">
    <text evidence="1">May function in recognizing stalled ribosomes, interact with stem-loop structures in stalled mRNA molecules, and effect endonucleolytic cleavage of the mRNA. May play a role in the release non-functional ribosomes and degradation of damaged mRNAs. Has endoribonuclease activity.</text>
</comment>
<comment type="cofactor">
    <cofactor evidence="1">
        <name>a divalent metal cation</name>
        <dbReference type="ChEBI" id="CHEBI:60240"/>
    </cofactor>
</comment>
<comment type="subunit">
    <text evidence="1">Monomer.</text>
</comment>
<comment type="subcellular location">
    <subcellularLocation>
        <location evidence="1">Cytoplasm</location>
    </subcellularLocation>
</comment>
<comment type="domain">
    <text evidence="1">The N-terminal domain has the RNA-binding Sm fold. It harbors the endoribonuclease activity.</text>
</comment>
<comment type="similarity">
    <text evidence="1">Belongs to the eukaryotic release factor 1 family. Pelota subfamily.</text>
</comment>
<gene>
    <name evidence="1" type="primary">pelA</name>
    <name type="ordered locus">CENSYa_1016</name>
</gene>
<sequence length="343" mass="36457">MIYRKIDDRSVSVVPQNPDDLFALRRVVRAGDRVAGSTTRAIRKEREYARPDRGERVRIKISLEVEAASLDGMLGRLRLGGTIHESSSEQVKRGSHHSLSVHAGDAISITKDWGPGERKLLRGSGGQGFVLVAVDTSECGIARLHGTHLEMITTLRSGSPGKRYKTSFNIGGYLEAAAAAAGLAVRKGDSLIVFGPGETRKKLANLMQGRRLPEPAVVEGIDSAGEDGIRLFTRSDAMRDSMSGSRMARVMDIIDSVMLLASKKSAKFSMGYAETRAAAEAGAIESLVFSDGLISAAGEQQAVDFLNNAQATGAGIFGADSTTDAGLRVDGLGGVIATLRFKP</sequence>
<evidence type="ECO:0000255" key="1">
    <source>
        <dbReference type="HAMAP-Rule" id="MF_01853"/>
    </source>
</evidence>
<proteinExistence type="inferred from homology"/>
<keyword id="KW-0963">Cytoplasm</keyword>
<keyword id="KW-0255">Endonuclease</keyword>
<keyword id="KW-0378">Hydrolase</keyword>
<keyword id="KW-0479">Metal-binding</keyword>
<keyword id="KW-0540">Nuclease</keyword>
<keyword id="KW-1185">Reference proteome</keyword>
<name>PELO_CENSY</name>
<accession>A0RWD1</accession>
<organism>
    <name type="scientific">Cenarchaeum symbiosum (strain A)</name>
    <dbReference type="NCBI Taxonomy" id="414004"/>
    <lineage>
        <taxon>Archaea</taxon>
        <taxon>Nitrososphaerota</taxon>
        <taxon>Candidatus Cenarchaeales</taxon>
        <taxon>Candidatus Cenarchaeaceae</taxon>
        <taxon>Candidatus Cenarchaeum</taxon>
    </lineage>
</organism>
<feature type="chain" id="PRO_0000361782" description="Protein pelota homolog">
    <location>
        <begin position="1"/>
        <end position="343"/>
    </location>
</feature>